<sequence length="488" mass="52893">MTFNHKSIDELHDLLVNKEVSALELTKATLEDIKEREETVGSFITVTQEEALAQAAAIDEKGIDADNVMSGIPLAVKDNISTKNILTTAASKMLYNYKPIFDATSVEKLYGRDMIIVGKTNMDEFAMGGSTENSYFKLTKNAWNQEKVAGGSSGGSATAVASGQVRLSLGSDTGGSIRQPAAFNGVVGIKPTYGRVSRFGLIAFGSSLDQIGPFSQTVKENAQLLNVISGNDKKDSTSSQVKVPDFTQFIGKDIKGMKIALPKEYIGQGIDEKVKETILKAAKHLESLGAIVEEVSLPHSKYGVAVYYIIASSEASSNLQRFDGIRYGYRTDDYENLDDVYVNTRSEGFGEEVKRRIMLGTFSLSSGYYDAYFKKAGQVRTLIMEDFKKVFANYDLILGPTAPTVAYDLDSQHQDPVAMYLADLLTIPVNLAGLPGISIPAGFVEGLPVGMQLIGKPFAEQTIYQAAAAFEASTDYHKQQPVIFGGGN</sequence>
<proteinExistence type="inferred from homology"/>
<protein>
    <recommendedName>
        <fullName evidence="1">Glutamyl-tRNA(Gln) amidotransferase subunit A</fullName>
        <shortName evidence="1">Glu-ADT subunit A</shortName>
        <ecNumber evidence="1">6.3.5.7</ecNumber>
    </recommendedName>
</protein>
<evidence type="ECO:0000255" key="1">
    <source>
        <dbReference type="HAMAP-Rule" id="MF_00120"/>
    </source>
</evidence>
<feature type="chain" id="PRO_0000105211" description="Glutamyl-tRNA(Gln) amidotransferase subunit A">
    <location>
        <begin position="1"/>
        <end position="488"/>
    </location>
</feature>
<feature type="active site" description="Charge relay system" evidence="1">
    <location>
        <position position="77"/>
    </location>
</feature>
<feature type="active site" description="Charge relay system" evidence="1">
    <location>
        <position position="152"/>
    </location>
</feature>
<feature type="active site" description="Acyl-ester intermediate" evidence="1">
    <location>
        <position position="176"/>
    </location>
</feature>
<accession>Q8DSG5</accession>
<gene>
    <name evidence="1" type="primary">gatA</name>
    <name type="ordered locus">SMU_1820c</name>
</gene>
<keyword id="KW-0067">ATP-binding</keyword>
<keyword id="KW-0436">Ligase</keyword>
<keyword id="KW-0547">Nucleotide-binding</keyword>
<keyword id="KW-0648">Protein biosynthesis</keyword>
<keyword id="KW-1185">Reference proteome</keyword>
<reference key="1">
    <citation type="journal article" date="2002" name="Proc. Natl. Acad. Sci. U.S.A.">
        <title>Genome sequence of Streptococcus mutans UA159, a cariogenic dental pathogen.</title>
        <authorList>
            <person name="Ajdic D.J."/>
            <person name="McShan W.M."/>
            <person name="McLaughlin R.E."/>
            <person name="Savic G."/>
            <person name="Chang J."/>
            <person name="Carson M.B."/>
            <person name="Primeaux C."/>
            <person name="Tian R."/>
            <person name="Kenton S."/>
            <person name="Jia H.G."/>
            <person name="Lin S.P."/>
            <person name="Qian Y."/>
            <person name="Li S."/>
            <person name="Zhu H."/>
            <person name="Najar F.Z."/>
            <person name="Lai H."/>
            <person name="White J."/>
            <person name="Roe B.A."/>
            <person name="Ferretti J.J."/>
        </authorList>
    </citation>
    <scope>NUCLEOTIDE SEQUENCE [LARGE SCALE GENOMIC DNA]</scope>
    <source>
        <strain>ATCC 700610 / UA159</strain>
    </source>
</reference>
<comment type="function">
    <text evidence="1">Allows the formation of correctly charged Gln-tRNA(Gln) through the transamidation of misacylated Glu-tRNA(Gln) in organisms which lack glutaminyl-tRNA synthetase. The reaction takes place in the presence of glutamine and ATP through an activated gamma-phospho-Glu-tRNA(Gln).</text>
</comment>
<comment type="catalytic activity">
    <reaction evidence="1">
        <text>L-glutamyl-tRNA(Gln) + L-glutamine + ATP + H2O = L-glutaminyl-tRNA(Gln) + L-glutamate + ADP + phosphate + H(+)</text>
        <dbReference type="Rhea" id="RHEA:17521"/>
        <dbReference type="Rhea" id="RHEA-COMP:9681"/>
        <dbReference type="Rhea" id="RHEA-COMP:9684"/>
        <dbReference type="ChEBI" id="CHEBI:15377"/>
        <dbReference type="ChEBI" id="CHEBI:15378"/>
        <dbReference type="ChEBI" id="CHEBI:29985"/>
        <dbReference type="ChEBI" id="CHEBI:30616"/>
        <dbReference type="ChEBI" id="CHEBI:43474"/>
        <dbReference type="ChEBI" id="CHEBI:58359"/>
        <dbReference type="ChEBI" id="CHEBI:78520"/>
        <dbReference type="ChEBI" id="CHEBI:78521"/>
        <dbReference type="ChEBI" id="CHEBI:456216"/>
        <dbReference type="EC" id="6.3.5.7"/>
    </reaction>
</comment>
<comment type="subunit">
    <text evidence="1">Heterotrimer of A, B and C subunits.</text>
</comment>
<comment type="similarity">
    <text evidence="1">Belongs to the amidase family. GatA subfamily.</text>
</comment>
<name>GATA_STRMU</name>
<dbReference type="EC" id="6.3.5.7" evidence="1"/>
<dbReference type="EMBL" id="AE014133">
    <property type="protein sequence ID" value="AAN59445.1"/>
    <property type="molecule type" value="Genomic_DNA"/>
</dbReference>
<dbReference type="RefSeq" id="NP_722139.1">
    <property type="nucleotide sequence ID" value="NC_004350.2"/>
</dbReference>
<dbReference type="RefSeq" id="WP_002263829.1">
    <property type="nucleotide sequence ID" value="NC_004350.2"/>
</dbReference>
<dbReference type="SMR" id="Q8DSG5"/>
<dbReference type="STRING" id="210007.SMU_1820c"/>
<dbReference type="GeneID" id="93858762"/>
<dbReference type="KEGG" id="smu:SMU_1820c"/>
<dbReference type="PATRIC" id="fig|210007.7.peg.1625"/>
<dbReference type="eggNOG" id="COG0154">
    <property type="taxonomic scope" value="Bacteria"/>
</dbReference>
<dbReference type="HOGENOM" id="CLU_009600_0_3_9"/>
<dbReference type="OrthoDB" id="9811471at2"/>
<dbReference type="PhylomeDB" id="Q8DSG5"/>
<dbReference type="Proteomes" id="UP000002512">
    <property type="component" value="Chromosome"/>
</dbReference>
<dbReference type="GO" id="GO:0030956">
    <property type="term" value="C:glutamyl-tRNA(Gln) amidotransferase complex"/>
    <property type="evidence" value="ECO:0007669"/>
    <property type="project" value="InterPro"/>
</dbReference>
<dbReference type="GO" id="GO:0005524">
    <property type="term" value="F:ATP binding"/>
    <property type="evidence" value="ECO:0007669"/>
    <property type="project" value="UniProtKB-KW"/>
</dbReference>
<dbReference type="GO" id="GO:0050567">
    <property type="term" value="F:glutaminyl-tRNA synthase (glutamine-hydrolyzing) activity"/>
    <property type="evidence" value="ECO:0007669"/>
    <property type="project" value="UniProtKB-UniRule"/>
</dbReference>
<dbReference type="GO" id="GO:0006412">
    <property type="term" value="P:translation"/>
    <property type="evidence" value="ECO:0007669"/>
    <property type="project" value="UniProtKB-UniRule"/>
</dbReference>
<dbReference type="Gene3D" id="3.90.1300.10">
    <property type="entry name" value="Amidase signature (AS) domain"/>
    <property type="match status" value="1"/>
</dbReference>
<dbReference type="HAMAP" id="MF_00120">
    <property type="entry name" value="GatA"/>
    <property type="match status" value="1"/>
</dbReference>
<dbReference type="InterPro" id="IPR000120">
    <property type="entry name" value="Amidase"/>
</dbReference>
<dbReference type="InterPro" id="IPR020556">
    <property type="entry name" value="Amidase_CS"/>
</dbReference>
<dbReference type="InterPro" id="IPR023631">
    <property type="entry name" value="Amidase_dom"/>
</dbReference>
<dbReference type="InterPro" id="IPR036928">
    <property type="entry name" value="AS_sf"/>
</dbReference>
<dbReference type="InterPro" id="IPR004412">
    <property type="entry name" value="GatA"/>
</dbReference>
<dbReference type="NCBIfam" id="TIGR00132">
    <property type="entry name" value="gatA"/>
    <property type="match status" value="1"/>
</dbReference>
<dbReference type="PANTHER" id="PTHR11895:SF151">
    <property type="entry name" value="GLUTAMYL-TRNA(GLN) AMIDOTRANSFERASE SUBUNIT A"/>
    <property type="match status" value="1"/>
</dbReference>
<dbReference type="PANTHER" id="PTHR11895">
    <property type="entry name" value="TRANSAMIDASE"/>
    <property type="match status" value="1"/>
</dbReference>
<dbReference type="Pfam" id="PF01425">
    <property type="entry name" value="Amidase"/>
    <property type="match status" value="1"/>
</dbReference>
<dbReference type="SUPFAM" id="SSF75304">
    <property type="entry name" value="Amidase signature (AS) enzymes"/>
    <property type="match status" value="1"/>
</dbReference>
<dbReference type="PROSITE" id="PS00571">
    <property type="entry name" value="AMIDASES"/>
    <property type="match status" value="1"/>
</dbReference>
<organism>
    <name type="scientific">Streptococcus mutans serotype c (strain ATCC 700610 / UA159)</name>
    <dbReference type="NCBI Taxonomy" id="210007"/>
    <lineage>
        <taxon>Bacteria</taxon>
        <taxon>Bacillati</taxon>
        <taxon>Bacillota</taxon>
        <taxon>Bacilli</taxon>
        <taxon>Lactobacillales</taxon>
        <taxon>Streptococcaceae</taxon>
        <taxon>Streptococcus</taxon>
    </lineage>
</organism>